<dbReference type="EMBL" id="AE004091">
    <property type="protein sequence ID" value="AAG08875.1"/>
    <property type="molecule type" value="Genomic_DNA"/>
</dbReference>
<dbReference type="PIR" id="A00098">
    <property type="entry name" value="CCPS4A"/>
</dbReference>
<dbReference type="PIR" id="A82961">
    <property type="entry name" value="A82961"/>
</dbReference>
<dbReference type="RefSeq" id="NP_254177.1">
    <property type="nucleotide sequence ID" value="NC_002516.2"/>
</dbReference>
<dbReference type="RefSeq" id="WP_003102831.1">
    <property type="nucleotide sequence ID" value="NZ_QZGE01000012.1"/>
</dbReference>
<dbReference type="PDB" id="6Q2U">
    <property type="method" value="X-ray"/>
    <property type="resolution" value="1.85 A"/>
    <property type="chains" value="A=21-201"/>
</dbReference>
<dbReference type="PDB" id="8SMR">
    <property type="method" value="EM"/>
    <property type="resolution" value="2.70 A"/>
    <property type="chains" value="K/N=21-201"/>
</dbReference>
<dbReference type="PDB" id="8SNH">
    <property type="method" value="EM"/>
    <property type="resolution" value="2.70 A"/>
    <property type="chains" value="K/N=21-201"/>
</dbReference>
<dbReference type="PDBsum" id="6Q2U"/>
<dbReference type="PDBsum" id="8SMR"/>
<dbReference type="PDBsum" id="8SNH"/>
<dbReference type="SMR" id="P00106"/>
<dbReference type="STRING" id="208964.PA5490"/>
<dbReference type="PaxDb" id="208964-PA5490"/>
<dbReference type="DNASU" id="877732"/>
<dbReference type="GeneID" id="877732"/>
<dbReference type="KEGG" id="pae:PA5490"/>
<dbReference type="PATRIC" id="fig|208964.12.peg.5755"/>
<dbReference type="PseudoCAP" id="PA5490"/>
<dbReference type="HOGENOM" id="CLU_076280_2_1_6"/>
<dbReference type="InParanoid" id="P00106"/>
<dbReference type="OrthoDB" id="9773456at2"/>
<dbReference type="PhylomeDB" id="P00106"/>
<dbReference type="BioCyc" id="PAER208964:G1FZ6-5617-MONOMER"/>
<dbReference type="Proteomes" id="UP000002438">
    <property type="component" value="Chromosome"/>
</dbReference>
<dbReference type="GO" id="GO:0042597">
    <property type="term" value="C:periplasmic space"/>
    <property type="evidence" value="ECO:0007669"/>
    <property type="project" value="UniProtKB-SubCell"/>
</dbReference>
<dbReference type="GO" id="GO:0004129">
    <property type="term" value="F:cytochrome-c oxidase activity"/>
    <property type="evidence" value="ECO:0000318"/>
    <property type="project" value="GO_Central"/>
</dbReference>
<dbReference type="GO" id="GO:0020037">
    <property type="term" value="F:heme binding"/>
    <property type="evidence" value="ECO:0000250"/>
    <property type="project" value="PseudoCAP"/>
</dbReference>
<dbReference type="GO" id="GO:0005506">
    <property type="term" value="F:iron ion binding"/>
    <property type="evidence" value="ECO:0007669"/>
    <property type="project" value="InterPro"/>
</dbReference>
<dbReference type="FunFam" id="1.10.760.10:FF:000016">
    <property type="entry name" value="Cytochrome c4"/>
    <property type="match status" value="1"/>
</dbReference>
<dbReference type="FunFam" id="1.10.760.10:FF:000022">
    <property type="entry name" value="Cytochrome c4"/>
    <property type="match status" value="1"/>
</dbReference>
<dbReference type="Gene3D" id="1.10.760.10">
    <property type="entry name" value="Cytochrome c-like domain"/>
    <property type="match status" value="2"/>
</dbReference>
<dbReference type="InterPro" id="IPR009056">
    <property type="entry name" value="Cyt_c-like_dom"/>
</dbReference>
<dbReference type="InterPro" id="IPR036909">
    <property type="entry name" value="Cyt_c-like_dom_sf"/>
</dbReference>
<dbReference type="InterPro" id="IPR024167">
    <property type="entry name" value="Cytochrome_c4-like"/>
</dbReference>
<dbReference type="InterPro" id="IPR050597">
    <property type="entry name" value="Cytochrome_c_Oxidase_Subunit"/>
</dbReference>
<dbReference type="PANTHER" id="PTHR33751">
    <property type="entry name" value="CBB3-TYPE CYTOCHROME C OXIDASE SUBUNIT FIXP"/>
    <property type="match status" value="1"/>
</dbReference>
<dbReference type="PANTHER" id="PTHR33751:SF9">
    <property type="entry name" value="CYTOCHROME C4"/>
    <property type="match status" value="1"/>
</dbReference>
<dbReference type="Pfam" id="PF00034">
    <property type="entry name" value="Cytochrom_C"/>
    <property type="match status" value="2"/>
</dbReference>
<dbReference type="PIRSF" id="PIRSF000005">
    <property type="entry name" value="Cytochrome_c4"/>
    <property type="match status" value="1"/>
</dbReference>
<dbReference type="SUPFAM" id="SSF46626">
    <property type="entry name" value="Cytochrome c"/>
    <property type="match status" value="2"/>
</dbReference>
<dbReference type="PROSITE" id="PS51007">
    <property type="entry name" value="CYTC"/>
    <property type="match status" value="2"/>
</dbReference>
<feature type="signal peptide" evidence="1">
    <location>
        <begin position="1"/>
        <end position="20"/>
    </location>
</feature>
<feature type="chain" id="PRO_0000006508" description="Cytochrome c4">
    <location>
        <begin position="21"/>
        <end position="201"/>
    </location>
</feature>
<feature type="binding site" description="covalent">
    <location>
        <position position="34"/>
    </location>
    <ligand>
        <name>heme c</name>
        <dbReference type="ChEBI" id="CHEBI:61717"/>
        <label>1</label>
    </ligand>
</feature>
<feature type="binding site" description="covalent">
    <location>
        <position position="37"/>
    </location>
    <ligand>
        <name>heme c</name>
        <dbReference type="ChEBI" id="CHEBI:61717"/>
        <label>1</label>
    </ligand>
</feature>
<feature type="binding site" description="axial binding residue">
    <location>
        <position position="38"/>
    </location>
    <ligand>
        <name>heme c</name>
        <dbReference type="ChEBI" id="CHEBI:61717"/>
        <label>1</label>
    </ligand>
    <ligandPart>
        <name>Fe</name>
        <dbReference type="ChEBI" id="CHEBI:18248"/>
    </ligandPart>
</feature>
<feature type="binding site" description="axial binding residue">
    <location>
        <position position="77"/>
    </location>
    <ligand>
        <name>heme c</name>
        <dbReference type="ChEBI" id="CHEBI:61717"/>
        <label>1</label>
    </ligand>
    <ligandPart>
        <name>Fe</name>
        <dbReference type="ChEBI" id="CHEBI:18248"/>
    </ligandPart>
</feature>
<feature type="binding site" description="covalent">
    <location>
        <position position="130"/>
    </location>
    <ligand>
        <name>heme c</name>
        <dbReference type="ChEBI" id="CHEBI:61717"/>
        <label>2</label>
    </ligand>
</feature>
<feature type="binding site" description="covalent">
    <location>
        <position position="133"/>
    </location>
    <ligand>
        <name>heme c</name>
        <dbReference type="ChEBI" id="CHEBI:61717"/>
        <label>2</label>
    </ligand>
</feature>
<feature type="binding site" description="axial binding residue">
    <location>
        <position position="134"/>
    </location>
    <ligand>
        <name>heme c</name>
        <dbReference type="ChEBI" id="CHEBI:61717"/>
        <label>2</label>
    </ligand>
    <ligandPart>
        <name>Fe</name>
        <dbReference type="ChEBI" id="CHEBI:18248"/>
    </ligandPart>
</feature>
<feature type="binding site" description="axial binding residue">
    <location>
        <position position="178"/>
    </location>
    <ligand>
        <name>heme c</name>
        <dbReference type="ChEBI" id="CHEBI:61717"/>
        <label>2</label>
    </ligand>
    <ligandPart>
        <name>Fe</name>
        <dbReference type="ChEBI" id="CHEBI:18248"/>
    </ligandPart>
</feature>
<feature type="sequence conflict" description="In Ref. 2; AA sequence." evidence="2" ref="2">
    <original>DQ</original>
    <variation>NE</variation>
    <location>
        <begin position="86"/>
        <end position="87"/>
    </location>
</feature>
<feature type="helix" evidence="3">
    <location>
        <begin position="24"/>
        <end position="30"/>
    </location>
</feature>
<feature type="helix" evidence="3">
    <location>
        <begin position="31"/>
        <end position="34"/>
    </location>
</feature>
<feature type="helix" evidence="3">
    <location>
        <begin position="35"/>
        <end position="38"/>
    </location>
</feature>
<feature type="helix" evidence="3">
    <location>
        <begin position="57"/>
        <end position="68"/>
    </location>
</feature>
<feature type="helix" evidence="3">
    <location>
        <begin position="75"/>
        <end position="77"/>
    </location>
</feature>
<feature type="turn" evidence="3">
    <location>
        <begin position="78"/>
        <end position="80"/>
    </location>
</feature>
<feature type="helix" evidence="3">
    <location>
        <begin position="86"/>
        <end position="98"/>
    </location>
</feature>
<feature type="turn" evidence="3">
    <location>
        <begin position="108"/>
        <end position="110"/>
    </location>
</feature>
<feature type="helix" evidence="3">
    <location>
        <begin position="111"/>
        <end position="120"/>
    </location>
</feature>
<feature type="helix" evidence="3">
    <location>
        <begin position="123"/>
        <end position="125"/>
    </location>
</feature>
<feature type="helix" evidence="3">
    <location>
        <begin position="130"/>
        <end position="132"/>
    </location>
</feature>
<feature type="turn" evidence="4">
    <location>
        <begin position="142"/>
        <end position="145"/>
    </location>
</feature>
<feature type="helix" evidence="3">
    <location>
        <begin position="154"/>
        <end position="165"/>
    </location>
</feature>
<feature type="turn" evidence="3">
    <location>
        <begin position="173"/>
        <end position="176"/>
    </location>
</feature>
<feature type="helix" evidence="3">
    <location>
        <begin position="177"/>
        <end position="182"/>
    </location>
</feature>
<feature type="helix" evidence="3">
    <location>
        <begin position="187"/>
        <end position="198"/>
    </location>
</feature>
<evidence type="ECO:0000269" key="1">
    <source ref="2"/>
</evidence>
<evidence type="ECO:0000305" key="2"/>
<evidence type="ECO:0007829" key="3">
    <source>
        <dbReference type="PDB" id="6Q2U"/>
    </source>
</evidence>
<evidence type="ECO:0007829" key="4">
    <source>
        <dbReference type="PDB" id="8SMR"/>
    </source>
</evidence>
<sequence>MNKLLVSLLLTLGLTGLAHAAGDAAAGQAKAAVCGACHGADGNSPAPNFPKLAGQGERYLLKQMHDIKDGKRTVLEMTGLLTNLSDQDLADIAAYFASQKMSVGMADPNLVAQGEALFRGGKIAEGMPACTGCHSPSGVGIATAGFPHLGGQHATYVAKQLTDFREGTRTNDGDTKIMQSIAAKLSNKDIAAISSYIQGLH</sequence>
<name>CYC4_PSEAE</name>
<accession>P00106</accession>
<gene>
    <name type="primary">cc4</name>
    <name type="ordered locus">PA5490</name>
</gene>
<protein>
    <recommendedName>
        <fullName>Cytochrome c4</fullName>
    </recommendedName>
</protein>
<proteinExistence type="evidence at protein level"/>
<keyword id="KW-0002">3D-structure</keyword>
<keyword id="KW-0903">Direct protein sequencing</keyword>
<keyword id="KW-0249">Electron transport</keyword>
<keyword id="KW-0349">Heme</keyword>
<keyword id="KW-0408">Iron</keyword>
<keyword id="KW-0479">Metal-binding</keyword>
<keyword id="KW-0574">Periplasm</keyword>
<keyword id="KW-1185">Reference proteome</keyword>
<keyword id="KW-0732">Signal</keyword>
<keyword id="KW-0813">Transport</keyword>
<organism>
    <name type="scientific">Pseudomonas aeruginosa (strain ATCC 15692 / DSM 22644 / CIP 104116 / JCM 14847 / LMG 12228 / 1C / PRS 101 / PAO1)</name>
    <dbReference type="NCBI Taxonomy" id="208964"/>
    <lineage>
        <taxon>Bacteria</taxon>
        <taxon>Pseudomonadati</taxon>
        <taxon>Pseudomonadota</taxon>
        <taxon>Gammaproteobacteria</taxon>
        <taxon>Pseudomonadales</taxon>
        <taxon>Pseudomonadaceae</taxon>
        <taxon>Pseudomonas</taxon>
    </lineage>
</organism>
<reference key="1">
    <citation type="journal article" date="2000" name="Nature">
        <title>Complete genome sequence of Pseudomonas aeruginosa PAO1, an opportunistic pathogen.</title>
        <authorList>
            <person name="Stover C.K."/>
            <person name="Pham X.-Q.T."/>
            <person name="Erwin A.L."/>
            <person name="Mizoguchi S.D."/>
            <person name="Warrener P."/>
            <person name="Hickey M.J."/>
            <person name="Brinkman F.S.L."/>
            <person name="Hufnagle W.O."/>
            <person name="Kowalik D.J."/>
            <person name="Lagrou M."/>
            <person name="Garber R.L."/>
            <person name="Goltry L."/>
            <person name="Tolentino E."/>
            <person name="Westbrock-Wadman S."/>
            <person name="Yuan Y."/>
            <person name="Brody L.L."/>
            <person name="Coulter S.N."/>
            <person name="Folger K.R."/>
            <person name="Kas A."/>
            <person name="Larbig K."/>
            <person name="Lim R.M."/>
            <person name="Smith K.A."/>
            <person name="Spencer D.H."/>
            <person name="Wong G.K.-S."/>
            <person name="Wu Z."/>
            <person name="Paulsen I.T."/>
            <person name="Reizer J."/>
            <person name="Saier M.H. Jr."/>
            <person name="Hancock R.E.W."/>
            <person name="Lory S."/>
            <person name="Olson M.V."/>
        </authorList>
    </citation>
    <scope>NUCLEOTIDE SEQUENCE [LARGE SCALE GENOMIC DNA]</scope>
    <source>
        <strain>ATCC 15692 / DSM 22644 / CIP 104116 / JCM 14847 / LMG 12228 / 1C / PRS 101 / PAO1</strain>
    </source>
</reference>
<reference key="2">
    <citation type="submission" date="1995-05" db="UniProtKB">
        <authorList>
            <person name="Ambler R.P."/>
        </authorList>
    </citation>
    <scope>PROTEIN SEQUENCE OF 21-201</scope>
</reference>
<comment type="function">
    <text>Diheme, high potential cytochrome c believed to be an intermediate electron donor to terminal oxidation systems.</text>
</comment>
<comment type="subcellular location">
    <subcellularLocation>
        <location>Periplasm</location>
    </subcellularLocation>
</comment>
<comment type="PTM">
    <text>Binds 2 heme c groups covalently per subunit.</text>
</comment>